<name>MDC1_PANTR</name>
<accession>Q7YR40</accession>
<accession>Q1XHY6</accession>
<proteinExistence type="inferred from homology"/>
<comment type="function">
    <text evidence="2">Histone reader protein required for checkpoint-mediated cell cycle arrest in response to DNA damage within both the S phase and G2/M phases of the cell cycle. Specifically recognizes and binds histone H2AX phosphorylated at 'Ser-139', a marker of DNA damage, serving as a scaffold for the recruitment of DNA repair and signal transduction proteins to discrete foci of DNA damage sites. Also required for downstream events subsequent to the recruitment of these proteins. These include phosphorylation and activation of the ATM, CHEK1 and CHEK2 kinases, and stabilization of TP53/p53 and apoptosis. ATM and CHEK2 may also be activated independently by a parallel pathway mediated by TP53BP1. Required for chromosomal stability during mitosis by promoting recruitment of TOPBP1 to DNA double strand breaks (DSBs): TOPBP1 forms filamentous assemblies that bridge MDC1 and tether broken chromosomes during mitosis. Required for the repair of DSBs via homologous recombination by promoting recruitment of NBN component of the MRN complex to DSBs.</text>
</comment>
<comment type="subunit">
    <text evidence="2">Homodimer. Interacts with H2AX, which requires phosphorylation of H2AX on 'Ser-139'. Interacts with the MRN complex, composed of MRE11, RAD50, and NBN. Interacts with CHEK2, which requires ATM-mediated phosphorylation of 'Thr-68' within the FHA domain of CHEK2. Interacts constitutively with the BRCA1-BARD1 complex, SMC1A and TP53BP1. Interacts with ATM and FANCD2, and these interactions are reduced upon DNA damage. Also interacts with the PRKDC complex, composed of XRCC6/KU70, XRCC5/KU80 and PRKDC/XRCC7. This interaction may be required for PRKDC autophosphorylation, which is essential for DNA double strand break (DSB) repair. When phosphorylated by ATM, interacts with RNF8 (via FHA domain). Interacts with CEP164. When phosphorylated, interacts with APTX (via FHA-like domain). Interacts (when phosphorylated) with TOPBP1; promoting TOPBP1 localization to DNA damage sites during mitosis. Interacts (when phosphorylated) with NBN; promoting NBN and MRN complex localization to DNA damage sites (By similarity).</text>
</comment>
<comment type="subcellular location">
    <subcellularLocation>
        <location evidence="2">Nucleus</location>
    </subcellularLocation>
    <subcellularLocation>
        <location evidence="2">Chromosome</location>
    </subcellularLocation>
    <text evidence="2">Associated with chromatin. Relocalizes to discrete nuclear foci following DNA damage, this requires 'Ser-139' phosphorylation of H2AX. Colocalizes with APTX at sites of DNA double-strand breaks.</text>
</comment>
<comment type="domain">
    <text evidence="2">Tandemly repeated BRCT domains are characteristic of proteins involved in DNA damage signaling. In MDC1, these repeats are required for localization to chromatin which flanks sites of DNA damage marked by 'Ser-139' phosphorylation of H2AX.</text>
</comment>
<comment type="PTM">
    <text evidence="2">Phosphorylated upon exposure to ionizing radiation (IR), ultraviolet radiation (UV), and hydroxyurea (HU). Phosphorylation in response to IR requires ATM, NBN, and possibly CHEK2. Also phosphorylated during the G2/M phase of the cell cycle and during activation of the mitotic spindle checkpoint. Phosphorylation at Thr-4 by ATM stabilizes and enhances homodimerization via the FHA domain. Phosphorylated at Ser-168 and Ser-196 by CK2 in response to DNA damage during mitosis, promoting interaction with TOPBP1. Phosphorylated by CK2 in response to DNA damage, promoting interaction with NBN and recruitment of the MRN complex to DNA damage sites.</text>
</comment>
<comment type="PTM">
    <text evidence="2">Sumoylation at Lys-1922 by PIAS4 following DNA damage promotes ubiquitin-mediated degradation.</text>
</comment>
<comment type="PTM">
    <text evidence="2">Ubiquitinated by RNF4, leading to proteasomal degradation; undergoes 'Lys-48'-linked polyubiquitination.</text>
</comment>
<protein>
    <recommendedName>
        <fullName>Mediator of DNA damage checkpoint protein 1</fullName>
    </recommendedName>
</protein>
<reference key="1">
    <citation type="journal article" date="2003" name="Proc. Natl. Acad. Sci. U.S.A.">
        <title>Comparative sequencing of human and chimpanzee MHC class I regions unveils insertions/deletions as the major path to genomic divergence.</title>
        <authorList>
            <person name="Anzai T."/>
            <person name="Shiina T."/>
            <person name="Kimura N."/>
            <person name="Yanagiya K."/>
            <person name="Kohara S."/>
            <person name="Shigenari A."/>
            <person name="Yamagata T."/>
            <person name="Kulski J.K."/>
            <person name="Naruse T.K."/>
            <person name="Fujimori Y."/>
            <person name="Fukuzumi Y."/>
            <person name="Yamazaki M."/>
            <person name="Tashiro H."/>
            <person name="Iwamoto C."/>
            <person name="Umehara Y."/>
            <person name="Imanishi T."/>
            <person name="Meyer A."/>
            <person name="Ikeo K."/>
            <person name="Gojobori T."/>
            <person name="Bahram S."/>
            <person name="Inoko H."/>
        </authorList>
    </citation>
    <scope>NUCLEOTIDE SEQUENCE [LARGE SCALE GENOMIC DNA]</scope>
</reference>
<reference key="2">
    <citation type="journal article" date="2006" name="Genetics">
        <title>Rapid evolution of major histocompatibility complex class I genes in primates generates new disease alleles in humans via hitchhiking diversity.</title>
        <authorList>
            <person name="Shiina T."/>
            <person name="Ota M."/>
            <person name="Shimizu S."/>
            <person name="Katsuyama Y."/>
            <person name="Hashimoto N."/>
            <person name="Takasu M."/>
            <person name="Anzai T."/>
            <person name="Kulski J.K."/>
            <person name="Kikkawa E."/>
            <person name="Naruse T."/>
            <person name="Kimura N."/>
            <person name="Yanagiya K."/>
            <person name="Watanabe A."/>
            <person name="Hosomichi K."/>
            <person name="Kohara S."/>
            <person name="Iwamoto C."/>
            <person name="Umehara Y."/>
            <person name="Meyer A."/>
            <person name="Wanner V."/>
            <person name="Sano K."/>
            <person name="Macquin C."/>
            <person name="Ikeo K."/>
            <person name="Tokunaga K."/>
            <person name="Gojobori T."/>
            <person name="Inoko H."/>
            <person name="Bahram S."/>
        </authorList>
    </citation>
    <scope>NUCLEOTIDE SEQUENCE [LARGE SCALE GENOMIC DNA]</scope>
</reference>
<sequence>MEDTQAIDWDVEEEEETEQSSESLRCNVEPVGRLHIFSGAHGPEKDFPLHLGKNVVGRMPDCSVALPFPSISKQHAEIEILAWDKAPILRDCGSLNGTQILRPPKVLSPGVSHRLRDQELILFADLLCQYHRLDVSLPFVSRGPLTVEETPRVQGGTQPQRLLLAEDSEEEVDFLSERRMVKKSRTTSSSVIVPESDEEGHSPVLGGLGPPFAFNLNSDTDVEEGQQPATEEASSAARRGATVEAKQSEAEVVTEIQLEKDQPLVKERDDDTKVKRGAENGVVPAGVILERSQPPGEDSDTDVDDDSRPPGRPAEVHLERAQPFGFINSDTDAEEERIPATPVVIPMKKRKIFHGVGTRGPGAPGLAHLQESQAGSDTDVEEGKAPQAVPLEKSQASMVINSDTDDEEEVSAALTLAHLKESQPAIWNRDAEEDMPQRVVLLQRSQTTTERDSDTDVEEEELPVENREAVLKDHTKIRALVRAHSEKDQPPFGDSDDSVEADKSSPGIHLERSQASTTVDINTQVEKEVPPGSAIIHIKKHQVSVEGTNQTDVKAVGGPAKLLVVSLEEAWPLHGDCETDAEEDTSLAASAVADVRKSQLPAEGDAGAEWAAAVLKQERAHEVGAQGGPPVAQVEQDLPISRENLTDLVVDTDTLGESTQPQREGAQVPTGREREQHVGGTKDSEDNYGDSEDLDLQATQCFLENQGLEAVQSMEDEPTQAFMLTPPQELGPSHCSFQTTGTLDEPWEVLATQPFCLRESEDSETQPFDTHLEAYGPCLSPPRAIPGDQHPESPVHTEPMGIQGRGRQTVDKVMGIPKETAERVGPERGPLERETEKLLPERQTDVTGEEELTKGKQDREQKQLLARDTQRQESDKNGESASPERDRESLKVEIETSEEIQEKQVQKQTLPSKAFEREVERPVANRECDPAELEEKVPKVILERDTQRGEPEGGSQDQKGQASSPIPEPGVEAGDLPGPTSAPVTSGSQSGGRGSPVSPRRHQKGLLNCKMPPAEKASRIRAAEKVSRGDQESPDACLPPTVPEAPAPPQKPLNSQSQKHLAPPPLLSPLLPSIKPTVRKTRQDGSQEAPEAPLSSELEPFHPKPKIRTRKSSRMTTFPATSAAPEPHPSTSTAQPVTPKPTSQATRSRTNRSSVKTPEQGVPTAPELQPCTSTDQPVTSEPTSQVTRGRKSRSSVKTPETVVPTALELQPSTSTDRPVTSEPTSHATRGRKNRSSVKTPEPVVPTAPELQPSTSTDQPVTSEPTYQATRGRKNRSSVKTPEPVVPTAPELQPSTSTDQPVTPKPTSRTTRSRTNMSSVKNPESTVPIAPELPPSTSTEQPVTPEPTSRATRGRKNRSSGKTPETLVPTAPKLEPSTSTDQPVTPEPTSQATRGRTNRSSVKTPETVVPTAPELQLSTSTDQAVTPKPTSRTTRSRTNMSSVKNPESTVPIAPELPPSTSTEQPVTPEPTSRATRGRKNRSSGKTPETLVPTAPKLEPSTSTDQPVTPEPTSQATRGRTNRSSVKTPETVVPTAPELQPSTSTDQPVTPEPTSQVTRGRTDRSSVKTPETVVPTAPELQASASTDQPVTSEPTSRTTRGRKNRSSVKTPETVVPTAPELQPSTSTDQPVTPEPTSQATRGRTNRSSVKTPESIVPIAPELQPSTSRNQLVTPEPTSRATRCRTNRSSVKTPEPVVPTAPEPHPTTSTDQPVTPKLTSRATRRKTNRSSVKTPKPVEPAASDLEPFTPTDQSVTPEAIAQGGQSKTLRSSTVRAMPVPTTPEFQSPVTTDQPISPEPITQPSCIKRQRAAGNPGSLAAPIDHKPCSAPLEPKSQASRNQRWGAVRAAESLTAIPEPASPQLLETPIHASQIQKVEPAGRSRFTPELQPKASQSRKRSLATMDSPPHQKQPQRGEVSQKTVIIKEEEEDTAEKPGKEEDVVTPKPGKRKRDQAEEEPNRIPSRSLRRTKLNQESTAPKVLFTGVVDARGERAVLALGGSLAGSAAEASHLVTDRIRRTVKFLCALGRGIPILSLDWLHQSHKAGFFLPPDEYVVTDPEQEKNFGFSLQDALSRARERRLLEGYEIYVTPGVQPPPPQMGEIISCCGGTYLPSMPRSYKPQRVVITCPQDFPHCSIPLRVGLPLLSPEFLLTGVLKQEAKPEAFVLSPLEMSST</sequence>
<keyword id="KW-0007">Acetylation</keyword>
<keyword id="KW-0131">Cell cycle</keyword>
<keyword id="KW-0158">Chromosome</keyword>
<keyword id="KW-0227">DNA damage</keyword>
<keyword id="KW-0234">DNA repair</keyword>
<keyword id="KW-1017">Isopeptide bond</keyword>
<keyword id="KW-0488">Methylation</keyword>
<keyword id="KW-0539">Nucleus</keyword>
<keyword id="KW-0597">Phosphoprotein</keyword>
<keyword id="KW-1185">Reference proteome</keyword>
<keyword id="KW-0677">Repeat</keyword>
<keyword id="KW-0832">Ubl conjugation</keyword>
<organism>
    <name type="scientific">Pan troglodytes</name>
    <name type="common">Chimpanzee</name>
    <dbReference type="NCBI Taxonomy" id="9598"/>
    <lineage>
        <taxon>Eukaryota</taxon>
        <taxon>Metazoa</taxon>
        <taxon>Chordata</taxon>
        <taxon>Craniata</taxon>
        <taxon>Vertebrata</taxon>
        <taxon>Euteleostomi</taxon>
        <taxon>Mammalia</taxon>
        <taxon>Eutheria</taxon>
        <taxon>Euarchontoglires</taxon>
        <taxon>Primates</taxon>
        <taxon>Haplorrhini</taxon>
        <taxon>Catarrhini</taxon>
        <taxon>Hominidae</taxon>
        <taxon>Pan</taxon>
    </lineage>
</organism>
<evidence type="ECO:0000250" key="1"/>
<evidence type="ECO:0000250" key="2">
    <source>
        <dbReference type="UniProtKB" id="Q14676"/>
    </source>
</evidence>
<evidence type="ECO:0000250" key="3">
    <source>
        <dbReference type="UniProtKB" id="Q5PSV9"/>
    </source>
</evidence>
<evidence type="ECO:0000250" key="4">
    <source>
        <dbReference type="UniProtKB" id="Q5U2M8"/>
    </source>
</evidence>
<evidence type="ECO:0000255" key="5">
    <source>
        <dbReference type="PROSITE-ProRule" id="PRU00033"/>
    </source>
</evidence>
<evidence type="ECO:0000255" key="6">
    <source>
        <dbReference type="PROSITE-ProRule" id="PRU00086"/>
    </source>
</evidence>
<evidence type="ECO:0000256" key="7">
    <source>
        <dbReference type="SAM" id="MobiDB-lite"/>
    </source>
</evidence>
<evidence type="ECO:0000305" key="8"/>
<dbReference type="EMBL" id="BA000041">
    <property type="protein sequence ID" value="BAC78176.1"/>
    <property type="molecule type" value="Genomic_DNA"/>
</dbReference>
<dbReference type="EMBL" id="AB210171">
    <property type="protein sequence ID" value="BAE92783.1"/>
    <property type="molecule type" value="Genomic_DNA"/>
</dbReference>
<dbReference type="EMBL" id="AB210172">
    <property type="protein sequence ID" value="BAE92784.1"/>
    <property type="molecule type" value="Genomic_DNA"/>
</dbReference>
<dbReference type="RefSeq" id="NP_001035841.1">
    <property type="nucleotide sequence ID" value="NM_001042382.1"/>
</dbReference>
<dbReference type="SMR" id="Q7YR40"/>
<dbReference type="FunCoup" id="Q7YR40">
    <property type="interactions" value="2219"/>
</dbReference>
<dbReference type="STRING" id="9598.ENSPTRP00000042596"/>
<dbReference type="GeneID" id="471959"/>
<dbReference type="CTD" id="9656"/>
<dbReference type="eggNOG" id="KOG2043">
    <property type="taxonomic scope" value="Eukaryota"/>
</dbReference>
<dbReference type="InParanoid" id="Q7YR40"/>
<dbReference type="Proteomes" id="UP000002277">
    <property type="component" value="Unplaced"/>
</dbReference>
<dbReference type="GO" id="GO:0005694">
    <property type="term" value="C:chromosome"/>
    <property type="evidence" value="ECO:0000250"/>
    <property type="project" value="UniProtKB"/>
</dbReference>
<dbReference type="GO" id="GO:0005634">
    <property type="term" value="C:nucleus"/>
    <property type="evidence" value="ECO:0000318"/>
    <property type="project" value="GO_Central"/>
</dbReference>
<dbReference type="GO" id="GO:0035861">
    <property type="term" value="C:site of double-strand break"/>
    <property type="evidence" value="ECO:0000250"/>
    <property type="project" value="UniProtKB"/>
</dbReference>
<dbReference type="GO" id="GO:0140463">
    <property type="term" value="F:chromatin-protein adaptor activity"/>
    <property type="evidence" value="ECO:0000250"/>
    <property type="project" value="UniProtKB"/>
</dbReference>
<dbReference type="GO" id="GO:0140566">
    <property type="term" value="F:histone reader activity"/>
    <property type="evidence" value="ECO:0000250"/>
    <property type="project" value="UniProtKB"/>
</dbReference>
<dbReference type="GO" id="GO:0006281">
    <property type="term" value="P:DNA repair"/>
    <property type="evidence" value="ECO:0007669"/>
    <property type="project" value="UniProtKB-KW"/>
</dbReference>
<dbReference type="GO" id="GO:0000076">
    <property type="term" value="P:DNA replication checkpoint signaling"/>
    <property type="evidence" value="ECO:0000250"/>
    <property type="project" value="UniProtKB"/>
</dbReference>
<dbReference type="GO" id="GO:1990166">
    <property type="term" value="P:protein localization to site of double-strand break"/>
    <property type="evidence" value="ECO:0000250"/>
    <property type="project" value="UniProtKB"/>
</dbReference>
<dbReference type="CDD" id="cd17744">
    <property type="entry name" value="BRCT_MDC1_rpt1"/>
    <property type="match status" value="1"/>
</dbReference>
<dbReference type="CDD" id="cd18441">
    <property type="entry name" value="BRCT_MDC1_rpt2"/>
    <property type="match status" value="1"/>
</dbReference>
<dbReference type="CDD" id="cd22665">
    <property type="entry name" value="FHA_MDC1"/>
    <property type="match status" value="1"/>
</dbReference>
<dbReference type="FunFam" id="2.60.200.20:FF:000029">
    <property type="entry name" value="Mediator of DNA damage checkpoint protein 1"/>
    <property type="match status" value="1"/>
</dbReference>
<dbReference type="FunFam" id="3.40.50.10190:FF:000037">
    <property type="entry name" value="Mediator of DNA damage checkpoint protein 1"/>
    <property type="match status" value="1"/>
</dbReference>
<dbReference type="FunFam" id="3.40.50.10190:FF:000040">
    <property type="entry name" value="Mediator of DNA damage checkpoint protein 1"/>
    <property type="match status" value="1"/>
</dbReference>
<dbReference type="Gene3D" id="2.60.200.20">
    <property type="match status" value="1"/>
</dbReference>
<dbReference type="Gene3D" id="3.40.50.10190">
    <property type="entry name" value="BRCT domain"/>
    <property type="match status" value="2"/>
</dbReference>
<dbReference type="InterPro" id="IPR001357">
    <property type="entry name" value="BRCT_dom"/>
</dbReference>
<dbReference type="InterPro" id="IPR036420">
    <property type="entry name" value="BRCT_dom_sf"/>
</dbReference>
<dbReference type="InterPro" id="IPR051579">
    <property type="entry name" value="DDR_Transcriptional_Reg"/>
</dbReference>
<dbReference type="InterPro" id="IPR000253">
    <property type="entry name" value="FHA_dom"/>
</dbReference>
<dbReference type="InterPro" id="IPR008984">
    <property type="entry name" value="SMAD_FHA_dom_sf"/>
</dbReference>
<dbReference type="PANTHER" id="PTHR23196:SF34">
    <property type="entry name" value="MEDIATOR OF DNA DAMAGE CHECKPOINT PROTEIN 1"/>
    <property type="match status" value="1"/>
</dbReference>
<dbReference type="PANTHER" id="PTHR23196">
    <property type="entry name" value="PAX TRANSCRIPTION ACTIVATION DOMAIN INTERACTING PROTEIN"/>
    <property type="match status" value="1"/>
</dbReference>
<dbReference type="Pfam" id="PF16589">
    <property type="entry name" value="BRCT_2"/>
    <property type="match status" value="1"/>
</dbReference>
<dbReference type="Pfam" id="PF00498">
    <property type="entry name" value="FHA"/>
    <property type="match status" value="1"/>
</dbReference>
<dbReference type="Pfam" id="PF16770">
    <property type="entry name" value="RTT107_BRCT_5"/>
    <property type="match status" value="1"/>
</dbReference>
<dbReference type="SMART" id="SM00240">
    <property type="entry name" value="FHA"/>
    <property type="match status" value="1"/>
</dbReference>
<dbReference type="SUPFAM" id="SSF52113">
    <property type="entry name" value="BRCT domain"/>
    <property type="match status" value="1"/>
</dbReference>
<dbReference type="SUPFAM" id="SSF49879">
    <property type="entry name" value="SMAD/FHA domain"/>
    <property type="match status" value="1"/>
</dbReference>
<dbReference type="PROSITE" id="PS50172">
    <property type="entry name" value="BRCT"/>
    <property type="match status" value="1"/>
</dbReference>
<dbReference type="PROSITE" id="PS50006">
    <property type="entry name" value="FHA_DOMAIN"/>
    <property type="match status" value="1"/>
</dbReference>
<feature type="chain" id="PRO_0000096319" description="Mediator of DNA damage checkpoint protein 1">
    <location>
        <begin position="1"/>
        <end position="2171"/>
    </location>
</feature>
<feature type="domain" description="FHA" evidence="6">
    <location>
        <begin position="54"/>
        <end position="105"/>
    </location>
</feature>
<feature type="domain" description="BRCT 1" evidence="5">
    <location>
        <begin position="1974"/>
        <end position="2052"/>
    </location>
</feature>
<feature type="domain" description="BRCT 2" evidence="5">
    <location>
        <begin position="2073"/>
        <end position="2164"/>
    </location>
</feature>
<feature type="region of interest" description="Interaction with CHEK2" evidence="1">
    <location>
        <begin position="1"/>
        <end position="150"/>
    </location>
</feature>
<feature type="region of interest" description="Disordered" evidence="7">
    <location>
        <begin position="1"/>
        <end position="22"/>
    </location>
</feature>
<feature type="region of interest" description="Interaction with the MRN complex" evidence="1">
    <location>
        <begin position="2"/>
        <end position="220"/>
    </location>
</feature>
<feature type="region of interest" description="Required for nuclear localization (NLS1)" evidence="1">
    <location>
        <begin position="145"/>
        <end position="568"/>
    </location>
</feature>
<feature type="region of interest" description="Disordered" evidence="7">
    <location>
        <begin position="185"/>
        <end position="248"/>
    </location>
</feature>
<feature type="region of interest" description="Disordered" evidence="7">
    <location>
        <begin position="261"/>
        <end position="317"/>
    </location>
</feature>
<feature type="region of interest" description="Disordered" evidence="7">
    <location>
        <begin position="355"/>
        <end position="387"/>
    </location>
</feature>
<feature type="region of interest" description="Disordered" evidence="7">
    <location>
        <begin position="443"/>
        <end position="469"/>
    </location>
</feature>
<feature type="region of interest" description="Disordered" evidence="7">
    <location>
        <begin position="481"/>
        <end position="522"/>
    </location>
</feature>
<feature type="region of interest" description="Disordered" evidence="7">
    <location>
        <begin position="653"/>
        <end position="689"/>
    </location>
</feature>
<feature type="region of interest" description="Disordered" evidence="7">
    <location>
        <begin position="780"/>
        <end position="1969"/>
    </location>
</feature>
<feature type="region of interest" description="Interaction with the PRKDC complex" evidence="1">
    <location>
        <begin position="1148"/>
        <end position="1692"/>
    </location>
</feature>
<feature type="region of interest" description="Required for nuclear localization (NLS2)" evidence="1">
    <location>
        <begin position="1780"/>
        <end position="2171"/>
    </location>
</feature>
<feature type="compositionally biased region" description="Acidic residues" evidence="7">
    <location>
        <begin position="1"/>
        <end position="19"/>
    </location>
</feature>
<feature type="compositionally biased region" description="Basic and acidic residues" evidence="7">
    <location>
        <begin position="261"/>
        <end position="278"/>
    </location>
</feature>
<feature type="compositionally biased region" description="Basic and acidic residues" evidence="7">
    <location>
        <begin position="306"/>
        <end position="317"/>
    </location>
</feature>
<feature type="compositionally biased region" description="Polar residues" evidence="7">
    <location>
        <begin position="513"/>
        <end position="522"/>
    </location>
</feature>
<feature type="compositionally biased region" description="Basic and acidic residues" evidence="7">
    <location>
        <begin position="671"/>
        <end position="685"/>
    </location>
</feature>
<feature type="compositionally biased region" description="Basic and acidic residues" evidence="7">
    <location>
        <begin position="819"/>
        <end position="844"/>
    </location>
</feature>
<feature type="compositionally biased region" description="Basic and acidic residues" evidence="7">
    <location>
        <begin position="851"/>
        <end position="862"/>
    </location>
</feature>
<feature type="compositionally biased region" description="Basic and acidic residues" evidence="7">
    <location>
        <begin position="868"/>
        <end position="905"/>
    </location>
</feature>
<feature type="compositionally biased region" description="Basic and acidic residues" evidence="7">
    <location>
        <begin position="914"/>
        <end position="951"/>
    </location>
</feature>
<feature type="compositionally biased region" description="Polar residues" evidence="7">
    <location>
        <begin position="955"/>
        <end position="964"/>
    </location>
</feature>
<feature type="compositionally biased region" description="Basic and acidic residues" evidence="7">
    <location>
        <begin position="1016"/>
        <end position="1031"/>
    </location>
</feature>
<feature type="compositionally biased region" description="Pro residues" evidence="7">
    <location>
        <begin position="1040"/>
        <end position="1051"/>
    </location>
</feature>
<feature type="compositionally biased region" description="Basic residues" evidence="7">
    <location>
        <begin position="1103"/>
        <end position="1113"/>
    </location>
</feature>
<feature type="compositionally biased region" description="Polar residues" evidence="7">
    <location>
        <begin position="1129"/>
        <end position="1157"/>
    </location>
</feature>
<feature type="compositionally biased region" description="Polar residues" evidence="7">
    <location>
        <begin position="1170"/>
        <end position="1187"/>
    </location>
</feature>
<feature type="compositionally biased region" description="Polar residues" evidence="7">
    <location>
        <begin position="1210"/>
        <end position="1227"/>
    </location>
</feature>
<feature type="compositionally biased region" description="Polar residues" evidence="7">
    <location>
        <begin position="1251"/>
        <end position="1268"/>
    </location>
</feature>
<feature type="compositionally biased region" description="Low complexity" evidence="7">
    <location>
        <begin position="1306"/>
        <end position="1318"/>
    </location>
</feature>
<feature type="compositionally biased region" description="Polar residues" evidence="7">
    <location>
        <begin position="1334"/>
        <end position="1350"/>
    </location>
</feature>
<feature type="compositionally biased region" description="Polar residues" evidence="7">
    <location>
        <begin position="1375"/>
        <end position="1403"/>
    </location>
</feature>
<feature type="compositionally biased region" description="Low complexity" evidence="7">
    <location>
        <begin position="1429"/>
        <end position="1441"/>
    </location>
</feature>
<feature type="compositionally biased region" description="Polar residues" evidence="7">
    <location>
        <begin position="1457"/>
        <end position="1473"/>
    </location>
</feature>
<feature type="compositionally biased region" description="Polar residues" evidence="7">
    <location>
        <begin position="1498"/>
        <end position="1526"/>
    </location>
</feature>
<feature type="compositionally biased region" description="Polar residues" evidence="7">
    <location>
        <begin position="1538"/>
        <end position="1557"/>
    </location>
</feature>
<feature type="compositionally biased region" description="Polar residues" evidence="7">
    <location>
        <begin position="1580"/>
        <end position="1596"/>
    </location>
</feature>
<feature type="compositionally biased region" description="Polar residues" evidence="7">
    <location>
        <begin position="1620"/>
        <end position="1649"/>
    </location>
</feature>
<feature type="compositionally biased region" description="Polar residues" evidence="7">
    <location>
        <begin position="1661"/>
        <end position="1678"/>
    </location>
</feature>
<feature type="compositionally biased region" description="Pro residues" evidence="7">
    <location>
        <begin position="1693"/>
        <end position="1702"/>
    </location>
</feature>
<feature type="compositionally biased region" description="Polar residues" evidence="7">
    <location>
        <begin position="1706"/>
        <end position="1718"/>
    </location>
</feature>
<feature type="compositionally biased region" description="Polar residues" evidence="7">
    <location>
        <begin position="1760"/>
        <end position="1771"/>
    </location>
</feature>
<feature type="compositionally biased region" description="Polar residues" evidence="7">
    <location>
        <begin position="1780"/>
        <end position="1801"/>
    </location>
</feature>
<feature type="compositionally biased region" description="Polar residues" evidence="7">
    <location>
        <begin position="1905"/>
        <end position="1918"/>
    </location>
</feature>
<feature type="compositionally biased region" description="Basic and acidic residues" evidence="7">
    <location>
        <begin position="1929"/>
        <end position="1939"/>
    </location>
</feature>
<feature type="modified residue" description="Phosphothreonine" evidence="2">
    <location>
        <position position="4"/>
    </location>
</feature>
<feature type="modified residue" description="Phosphoserine" evidence="2">
    <location>
        <position position="108"/>
    </location>
</feature>
<feature type="modified residue" description="Phosphothreonine" evidence="2">
    <location>
        <position position="146"/>
    </location>
</feature>
<feature type="modified residue" description="Phosphoserine" evidence="2">
    <location>
        <position position="168"/>
    </location>
</feature>
<feature type="modified residue" description="Phosphoserine" evidence="4">
    <location>
        <position position="176"/>
    </location>
</feature>
<feature type="modified residue" description="Phosphoserine" evidence="2">
    <location>
        <position position="196"/>
    </location>
</feature>
<feature type="modified residue" description="Phosphoserine" evidence="2">
    <location>
        <position position="218"/>
    </location>
</feature>
<feature type="modified residue" description="Phosphothreonine" evidence="2">
    <location>
        <position position="220"/>
    </location>
</feature>
<feature type="modified residue" description="Phosphoserine" evidence="2">
    <location>
        <position position="299"/>
    </location>
</feature>
<feature type="modified residue" description="Phosphothreonine" evidence="2">
    <location>
        <position position="301"/>
    </location>
</feature>
<feature type="modified residue" description="Phosphoserine" evidence="2">
    <location>
        <position position="329"/>
    </location>
</feature>
<feature type="modified residue" description="Phosphothreonine" evidence="2">
    <location>
        <position position="331"/>
    </location>
</feature>
<feature type="modified residue" description="Phosphoserine" evidence="2">
    <location>
        <position position="372"/>
    </location>
</feature>
<feature type="modified residue" description="Phosphoserine" evidence="2">
    <location>
        <position position="376"/>
    </location>
</feature>
<feature type="modified residue" description="Phosphothreonine" evidence="2">
    <location>
        <position position="378"/>
    </location>
</feature>
<feature type="modified residue" description="Phosphoserine" evidence="2">
    <location>
        <position position="394"/>
    </location>
</feature>
<feature type="modified residue" description="Phosphoserine" evidence="2">
    <location>
        <position position="397"/>
    </location>
</feature>
<feature type="modified residue" description="Phosphoserine" evidence="2">
    <location>
        <position position="402"/>
    </location>
</feature>
<feature type="modified residue" description="Phosphothreonine" evidence="2">
    <location>
        <position position="404"/>
    </location>
</feature>
<feature type="modified residue" description="Phosphoserine" evidence="2">
    <location>
        <position position="411"/>
    </location>
</feature>
<feature type="modified residue" description="Phosphothreonine" evidence="2">
    <location>
        <position position="449"/>
    </location>
</feature>
<feature type="modified residue" description="Phosphoserine" evidence="2">
    <location>
        <position position="453"/>
    </location>
</feature>
<feature type="modified residue" description="Phosphothreonine" evidence="2">
    <location>
        <position position="455"/>
    </location>
</feature>
<feature type="modified residue" description="Phosphoserine" evidence="2">
    <location>
        <position position="485"/>
    </location>
</feature>
<feature type="modified residue" description="Phosphoserine" evidence="2">
    <location>
        <position position="495"/>
    </location>
</feature>
<feature type="modified residue" description="Phosphoserine" evidence="2">
    <location>
        <position position="498"/>
    </location>
</feature>
<feature type="modified residue" description="Phosphoserine" evidence="3">
    <location>
        <position position="504"/>
    </location>
</feature>
<feature type="modified residue" description="Phosphoserine" evidence="3">
    <location>
        <position position="505"/>
    </location>
</feature>
<feature type="modified residue" description="Phosphoserine" evidence="2">
    <location>
        <position position="513"/>
    </location>
</feature>
<feature type="modified residue" description="Phosphothreonine" evidence="2">
    <location>
        <position position="523"/>
    </location>
</feature>
<feature type="modified residue" description="Phosphoserine" evidence="4">
    <location>
        <position position="590"/>
    </location>
</feature>
<feature type="modified residue" description="Phosphoserine" evidence="2">
    <location>
        <position position="780"/>
    </location>
</feature>
<feature type="modified residue" description="Phosphoserine" evidence="2">
    <location>
        <position position="793"/>
    </location>
</feature>
<feature type="modified residue" description="N6-acetyllysine" evidence="2">
    <location>
        <position position="812"/>
    </location>
</feature>
<feature type="modified residue" description="Phosphoserine" evidence="2">
    <location>
        <position position="955"/>
    </location>
</feature>
<feature type="modified residue" description="Phosphoserine" evidence="2">
    <location>
        <position position="998"/>
    </location>
</feature>
<feature type="modified residue" description="Phosphoserine" evidence="2">
    <location>
        <position position="1033"/>
    </location>
</feature>
<feature type="modified residue" description="Phosphoserine" evidence="2">
    <location>
        <position position="1068"/>
    </location>
</feature>
<feature type="modified residue" description="Phosphoserine" evidence="2">
    <location>
        <position position="1086"/>
    </location>
</feature>
<feature type="modified residue" description="Phosphothreonine" evidence="2">
    <location>
        <position position="1157"/>
    </location>
</feature>
<feature type="modified residue" description="Phosphothreonine" evidence="2">
    <location>
        <position position="1198"/>
    </location>
</feature>
<feature type="modified residue" description="Phosphoserine" evidence="3">
    <location>
        <position position="1235"/>
    </location>
</feature>
<feature type="modified residue" description="Phosphothreonine" evidence="2">
    <location>
        <position position="1239"/>
    </location>
</feature>
<feature type="modified residue" description="Phosphothreonine" evidence="2">
    <location>
        <position position="1280"/>
    </location>
</feature>
<feature type="modified residue" description="Phosphothreonine" evidence="2">
    <location>
        <position position="1302"/>
    </location>
</feature>
<feature type="modified residue" description="Phosphoserine" evidence="2">
    <location>
        <position position="1481"/>
    </location>
</feature>
<feature type="modified residue" description="Phosphoserine" evidence="2">
    <location>
        <position position="1482"/>
    </location>
</feature>
<feature type="modified residue" description="N6-acetyllysine" evidence="2">
    <location>
        <position position="1484"/>
    </location>
</feature>
<feature type="modified residue" description="Phosphothreonine" evidence="2">
    <location>
        <position position="1485"/>
    </location>
</feature>
<feature type="modified residue" description="Phosphothreonine" evidence="2">
    <location>
        <position position="1507"/>
    </location>
</feature>
<feature type="modified residue" description="Phosphothreonine" evidence="2">
    <location>
        <position position="1548"/>
    </location>
</feature>
<feature type="modified residue" description="Phosphothreonine" evidence="3">
    <location>
        <position position="1615"/>
    </location>
</feature>
<feature type="modified residue" description="Phosphothreonine" evidence="2">
    <location>
        <position position="1630"/>
    </location>
</feature>
<feature type="modified residue" description="Phosphoserine" evidence="2">
    <location>
        <position position="1646"/>
    </location>
</feature>
<feature type="modified residue" description="Phosphothreonine" evidence="2">
    <location>
        <position position="1649"/>
    </location>
</feature>
<feature type="modified residue" description="Phosphothreonine" evidence="2">
    <location>
        <position position="1671"/>
    </location>
</feature>
<feature type="modified residue" description="Phosphoserine" evidence="2">
    <location>
        <position position="1686"/>
    </location>
</feature>
<feature type="modified residue" description="Phosphothreonine" evidence="2">
    <location>
        <position position="1690"/>
    </location>
</feature>
<feature type="modified residue" description="Phosphothreonine" evidence="2">
    <location>
        <position position="1712"/>
    </location>
</feature>
<feature type="modified residue" description="Phosphothreonine" evidence="2">
    <location>
        <position position="1746"/>
    </location>
</feature>
<feature type="modified residue" description="Phosphothreonine" evidence="2">
    <location>
        <position position="1753"/>
    </location>
</feature>
<feature type="modified residue" description="Phosphoserine" evidence="2">
    <location>
        <position position="1763"/>
    </location>
</feature>
<feature type="modified residue" description="Phosphothreonine" evidence="2">
    <location>
        <position position="1779"/>
    </location>
</feature>
<feature type="modified residue" description="Phosphoserine" evidence="2">
    <location>
        <position position="1784"/>
    </location>
</feature>
<feature type="modified residue" description="Phosphoserine" evidence="2">
    <location>
        <position position="1793"/>
    </location>
</feature>
<feature type="modified residue" description="Phosphoserine" evidence="2">
    <location>
        <position position="1857"/>
    </location>
</feature>
<feature type="modified residue" description="Phosphothreonine" evidence="2">
    <location>
        <position position="1882"/>
    </location>
</feature>
<feature type="modified residue" description="Phosphoserine" evidence="2">
    <location>
        <position position="1902"/>
    </location>
</feature>
<feature type="modified residue" description="Phosphothreonine" evidence="2">
    <location>
        <position position="1940"/>
    </location>
</feature>
<feature type="modified residue" description="Omega-N-methylarginine" evidence="2">
    <location>
        <position position="2025"/>
    </location>
</feature>
<feature type="cross-link" description="Glycyl lysine isopeptide (Lys-Gly) (interchain with G-Cter in SUMO1); alternate" evidence="2">
    <location>
        <position position="616"/>
    </location>
</feature>
<feature type="cross-link" description="Glycyl lysine isopeptide (Lys-Gly) (interchain with G-Cter in SUMO2); alternate" evidence="2">
    <location>
        <position position="616"/>
    </location>
</feature>
<feature type="cross-link" description="Glycyl lysine isopeptide (Lys-Gly) (interchain with G-Cter in SUMO1); alternate" evidence="2">
    <location>
        <position position="1495"/>
    </location>
</feature>
<feature type="cross-link" description="Glycyl lysine isopeptide (Lys-Gly) (interchain with G-Cter in SUMO2); alternate" evidence="2">
    <location>
        <position position="1495"/>
    </location>
</feature>
<feature type="cross-link" description="Glycyl lysine isopeptide (Lys-Gly) (interchain with G-Cter in SUMO2)" evidence="2">
    <location>
        <position position="1822"/>
    </location>
</feature>
<feature type="cross-link" description="Glycyl lysine isopeptide (Lys-Gly) (interchain with G-Cter in SUMO2)" evidence="2">
    <location>
        <position position="1872"/>
    </location>
</feature>
<feature type="cross-link" description="Glycyl lysine isopeptide (Lys-Gly) (interchain with G-Cter in SUMO1); alternate" evidence="2">
    <location>
        <position position="1922"/>
    </location>
</feature>
<feature type="cross-link" description="Glycyl lysine isopeptide (Lys-Gly) (interchain with G-Cter in SUMO2); alternate" evidence="2">
    <location>
        <position position="1922"/>
    </location>
</feature>
<feature type="sequence conflict" description="In Ref. 2; BAE92783/BAE92784." evidence="8" ref="2">
    <original>R</original>
    <variation>C</variation>
    <location>
        <position position="438"/>
    </location>
</feature>
<feature type="sequence conflict" description="In Ref. 2; BAE92783/BAE92784." evidence="8" ref="2">
    <original>L</original>
    <variation>Q</variation>
    <location>
        <position position="757"/>
    </location>
</feature>
<feature type="sequence conflict" description="In Ref. 2; BAE92783/BAE92784." evidence="8" ref="2">
    <original>QG</original>
    <variation>PV</variation>
    <location>
        <begin position="1160"/>
        <end position="1161"/>
    </location>
</feature>
<feature type="sequence conflict" description="In Ref. 2; BAE92783/BAE92784." evidence="8" ref="2">
    <original>K</original>
    <variation>E</variation>
    <location>
        <position position="1427"/>
    </location>
</feature>
<feature type="sequence conflict" description="In Ref. 2; BAE92783/BAE92784." evidence="8" ref="2">
    <original>V</original>
    <variation>D</variation>
    <location>
        <position position="1530"/>
    </location>
</feature>
<gene>
    <name type="primary">MDC1</name>
</gene>